<sequence>MTLPSGHPKSRLIKKFMALGPYIREEQCEENRFFFDCLAVCVNVQPAPEEREFWGWWMEMEAEEKRFTYTYHFGLFNKAGHWQATTIKDKEVVERLEQTLRGFHEKARALLETFELKLEPADDFTNEKLKLSA</sequence>
<feature type="chain" id="PRO_1000065787" description="Sigma factor-binding protein Crl">
    <location>
        <begin position="1"/>
        <end position="133"/>
    </location>
</feature>
<feature type="region of interest" description="Essential for activity" evidence="1">
    <location>
        <begin position="99"/>
        <end position="122"/>
    </location>
</feature>
<feature type="coiled-coil region" evidence="1">
    <location>
        <begin position="90"/>
        <end position="113"/>
    </location>
</feature>
<name>CRL_ENT38</name>
<evidence type="ECO:0000255" key="1">
    <source>
        <dbReference type="HAMAP-Rule" id="MF_01178"/>
    </source>
</evidence>
<dbReference type="EMBL" id="CP000653">
    <property type="protein sequence ID" value="ABP59452.1"/>
    <property type="molecule type" value="Genomic_DNA"/>
</dbReference>
<dbReference type="RefSeq" id="WP_012016173.1">
    <property type="nucleotide sequence ID" value="NC_009436.1"/>
</dbReference>
<dbReference type="SMR" id="A4W6X2"/>
<dbReference type="STRING" id="399742.Ent638_0766"/>
<dbReference type="KEGG" id="ent:Ent638_0766"/>
<dbReference type="eggNOG" id="ENOG502ZQ8E">
    <property type="taxonomic scope" value="Bacteria"/>
</dbReference>
<dbReference type="HOGENOM" id="CLU_136773_0_0_6"/>
<dbReference type="OrthoDB" id="6428303at2"/>
<dbReference type="Proteomes" id="UP000000230">
    <property type="component" value="Chromosome"/>
</dbReference>
<dbReference type="GO" id="GO:0005737">
    <property type="term" value="C:cytoplasm"/>
    <property type="evidence" value="ECO:0007669"/>
    <property type="project" value="UniProtKB-SubCell"/>
</dbReference>
<dbReference type="GO" id="GO:0045893">
    <property type="term" value="P:positive regulation of DNA-templated transcription"/>
    <property type="evidence" value="ECO:0007669"/>
    <property type="project" value="UniProtKB-UniRule"/>
</dbReference>
<dbReference type="Gene3D" id="3.30.310.230">
    <property type="entry name" value="Sigma factor-binding protein Crl monomer"/>
    <property type="match status" value="1"/>
</dbReference>
<dbReference type="HAMAP" id="MF_01178">
    <property type="entry name" value="Crl"/>
    <property type="match status" value="1"/>
</dbReference>
<dbReference type="InterPro" id="IPR009986">
    <property type="entry name" value="Tscrpt_reg_Crl"/>
</dbReference>
<dbReference type="InterPro" id="IPR038208">
    <property type="entry name" value="Tscrpt_reg_Crl_sf"/>
</dbReference>
<dbReference type="NCBIfam" id="NF008217">
    <property type="entry name" value="PRK10984.1"/>
    <property type="match status" value="1"/>
</dbReference>
<dbReference type="Pfam" id="PF07417">
    <property type="entry name" value="Crl"/>
    <property type="match status" value="1"/>
</dbReference>
<organism>
    <name type="scientific">Enterobacter sp. (strain 638)</name>
    <dbReference type="NCBI Taxonomy" id="399742"/>
    <lineage>
        <taxon>Bacteria</taxon>
        <taxon>Pseudomonadati</taxon>
        <taxon>Pseudomonadota</taxon>
        <taxon>Gammaproteobacteria</taxon>
        <taxon>Enterobacterales</taxon>
        <taxon>Enterobacteriaceae</taxon>
        <taxon>Enterobacter</taxon>
    </lineage>
</organism>
<reference key="1">
    <citation type="journal article" date="2010" name="PLoS Genet.">
        <title>Genome sequence of the plant growth promoting endophytic bacterium Enterobacter sp. 638.</title>
        <authorList>
            <person name="Taghavi S."/>
            <person name="van der Lelie D."/>
            <person name="Hoffman A."/>
            <person name="Zhang Y.B."/>
            <person name="Walla M.D."/>
            <person name="Vangronsveld J."/>
            <person name="Newman L."/>
            <person name="Monchy S."/>
        </authorList>
    </citation>
    <scope>NUCLEOTIDE SEQUENCE [LARGE SCALE GENOMIC DNA]</scope>
    <source>
        <strain>638</strain>
    </source>
</reference>
<protein>
    <recommendedName>
        <fullName evidence="1">Sigma factor-binding protein Crl</fullName>
    </recommendedName>
</protein>
<gene>
    <name evidence="1" type="primary">crl</name>
    <name type="ordered locus">Ent638_0766</name>
</gene>
<comment type="function">
    <text evidence="1">Binds to the sigma-S subunit of RNA polymerase, activating expression of sigma-S-regulated genes. Stimulates RNA polymerase holoenzyme formation and may bind to several other sigma factors, such as sigma-70 and sigma-32.</text>
</comment>
<comment type="subcellular location">
    <subcellularLocation>
        <location evidence="1">Cytoplasm</location>
    </subcellularLocation>
</comment>
<comment type="similarity">
    <text evidence="1">Belongs to the Crl family.</text>
</comment>
<accession>A4W6X2</accession>
<proteinExistence type="inferred from homology"/>
<keyword id="KW-0010">Activator</keyword>
<keyword id="KW-0175">Coiled coil</keyword>
<keyword id="KW-0963">Cytoplasm</keyword>
<keyword id="KW-0804">Transcription</keyword>
<keyword id="KW-0805">Transcription regulation</keyword>